<feature type="chain" id="PRO_1000019395" description="Cobalt transport protein CbiN">
    <location>
        <begin position="1"/>
        <end position="97"/>
    </location>
</feature>
<feature type="transmembrane region" description="Helical" evidence="1">
    <location>
        <begin position="6"/>
        <end position="26"/>
    </location>
</feature>
<feature type="transmembrane region" description="Helical" evidence="1">
    <location>
        <begin position="68"/>
        <end position="88"/>
    </location>
</feature>
<gene>
    <name evidence="1" type="primary">cbiN</name>
    <name type="ordered locus">MmarC7_0726</name>
</gene>
<comment type="function">
    <text evidence="1">Part of the energy-coupling factor (ECF) transporter complex CbiMNOQ involved in cobalt import.</text>
</comment>
<comment type="pathway">
    <text evidence="1">Cofactor biosynthesis; adenosylcobalamin biosynthesis.</text>
</comment>
<comment type="subunit">
    <text evidence="1">Forms an energy-coupling factor (ECF) transporter complex composed of an ATP-binding protein (A component, CbiO), a transmembrane protein (T component, CbiQ) and 2 possible substrate-capture proteins (S components, CbiM and CbiN) of unknown stoichimetry.</text>
</comment>
<comment type="subcellular location">
    <subcellularLocation>
        <location evidence="1">Cell membrane</location>
        <topology evidence="1">Multi-pass membrane protein</topology>
    </subcellularLocation>
</comment>
<comment type="similarity">
    <text evidence="1">Belongs to the CbiN family.</text>
</comment>
<keyword id="KW-1003">Cell membrane</keyword>
<keyword id="KW-0169">Cobalamin biosynthesis</keyword>
<keyword id="KW-0170">Cobalt</keyword>
<keyword id="KW-0171">Cobalt transport</keyword>
<keyword id="KW-0406">Ion transport</keyword>
<keyword id="KW-0472">Membrane</keyword>
<keyword id="KW-0812">Transmembrane</keyword>
<keyword id="KW-1133">Transmembrane helix</keyword>
<keyword id="KW-0813">Transport</keyword>
<dbReference type="EMBL" id="CP000745">
    <property type="protein sequence ID" value="ABR65793.1"/>
    <property type="molecule type" value="Genomic_DNA"/>
</dbReference>
<dbReference type="STRING" id="426368.MmarC7_0726"/>
<dbReference type="KEGG" id="mmz:MmarC7_0726"/>
<dbReference type="eggNOG" id="arCOG04384">
    <property type="taxonomic scope" value="Archaea"/>
</dbReference>
<dbReference type="HOGENOM" id="CLU_136197_2_0_2"/>
<dbReference type="UniPathway" id="UPA00148"/>
<dbReference type="GO" id="GO:0005886">
    <property type="term" value="C:plasma membrane"/>
    <property type="evidence" value="ECO:0007669"/>
    <property type="project" value="UniProtKB-SubCell"/>
</dbReference>
<dbReference type="GO" id="GO:0015087">
    <property type="term" value="F:cobalt ion transmembrane transporter activity"/>
    <property type="evidence" value="ECO:0007669"/>
    <property type="project" value="UniProtKB-UniRule"/>
</dbReference>
<dbReference type="GO" id="GO:0009236">
    <property type="term" value="P:cobalamin biosynthetic process"/>
    <property type="evidence" value="ECO:0007669"/>
    <property type="project" value="UniProtKB-UniRule"/>
</dbReference>
<dbReference type="HAMAP" id="MF_00330">
    <property type="entry name" value="CbiN"/>
    <property type="match status" value="1"/>
</dbReference>
<dbReference type="InterPro" id="IPR003705">
    <property type="entry name" value="CbiN"/>
</dbReference>
<dbReference type="NCBIfam" id="TIGR01165">
    <property type="entry name" value="cbiN"/>
    <property type="match status" value="1"/>
</dbReference>
<dbReference type="NCBIfam" id="NF002780">
    <property type="entry name" value="PRK02898.1"/>
    <property type="match status" value="1"/>
</dbReference>
<dbReference type="PANTHER" id="PTHR38662">
    <property type="entry name" value="COBALT TRANSPORT PROTEIN CBIN"/>
    <property type="match status" value="1"/>
</dbReference>
<dbReference type="PANTHER" id="PTHR38662:SF1">
    <property type="entry name" value="COBALT TRANSPORT PROTEIN CBIN"/>
    <property type="match status" value="1"/>
</dbReference>
<dbReference type="Pfam" id="PF02553">
    <property type="entry name" value="CbiN"/>
    <property type="match status" value="1"/>
</dbReference>
<evidence type="ECO:0000255" key="1">
    <source>
        <dbReference type="HAMAP-Rule" id="MF_00330"/>
    </source>
</evidence>
<name>CBIN_METM7</name>
<proteinExistence type="inferred from homology"/>
<sequence>MEFKHVLMILGVIILTLAPLIMYSGLGEDEGYFGGADGAAGDLIMEISPNYEPWFEPFWEPPSGEIESLLFALQAAIGALIIGYFFGYNKAKYDDQN</sequence>
<organism>
    <name type="scientific">Methanococcus maripaludis (strain C7 / ATCC BAA-1331)</name>
    <dbReference type="NCBI Taxonomy" id="426368"/>
    <lineage>
        <taxon>Archaea</taxon>
        <taxon>Methanobacteriati</taxon>
        <taxon>Methanobacteriota</taxon>
        <taxon>Methanomada group</taxon>
        <taxon>Methanococci</taxon>
        <taxon>Methanococcales</taxon>
        <taxon>Methanococcaceae</taxon>
        <taxon>Methanococcus</taxon>
    </lineage>
</organism>
<accession>A6VH67</accession>
<protein>
    <recommendedName>
        <fullName evidence="1">Cobalt transport protein CbiN</fullName>
    </recommendedName>
    <alternativeName>
        <fullName evidence="1">Energy-coupling factor transporter probable substrate-capture protein CbiN</fullName>
        <shortName evidence="1">ECF transporter S component CbiN</shortName>
    </alternativeName>
</protein>
<reference key="1">
    <citation type="submission" date="2007-06" db="EMBL/GenBank/DDBJ databases">
        <title>Complete sequence of Methanococcus maripaludis C7.</title>
        <authorList>
            <consortium name="US DOE Joint Genome Institute"/>
            <person name="Copeland A."/>
            <person name="Lucas S."/>
            <person name="Lapidus A."/>
            <person name="Barry K."/>
            <person name="Glavina del Rio T."/>
            <person name="Dalin E."/>
            <person name="Tice H."/>
            <person name="Pitluck S."/>
            <person name="Clum A."/>
            <person name="Schmutz J."/>
            <person name="Larimer F."/>
            <person name="Land M."/>
            <person name="Hauser L."/>
            <person name="Kyrpides N."/>
            <person name="Anderson I."/>
            <person name="Sieprawska-Lupa M."/>
            <person name="Whitman W.B."/>
            <person name="Richardson P."/>
        </authorList>
    </citation>
    <scope>NUCLEOTIDE SEQUENCE [LARGE SCALE GENOMIC DNA]</scope>
    <source>
        <strain>C7 / ATCC BAA-1331</strain>
    </source>
</reference>